<feature type="chain" id="PRO_0000152038" description="Leucine--tRNA ligase">
    <location>
        <begin position="1"/>
        <end position="803"/>
    </location>
</feature>
<feature type="short sequence motif" description="'HIGH' region">
    <location>
        <begin position="40"/>
        <end position="51"/>
    </location>
</feature>
<feature type="short sequence motif" description="'KMSKS' region">
    <location>
        <begin position="575"/>
        <end position="579"/>
    </location>
</feature>
<feature type="binding site" evidence="1">
    <location>
        <position position="578"/>
    </location>
    <ligand>
        <name>ATP</name>
        <dbReference type="ChEBI" id="CHEBI:30616"/>
    </ligand>
</feature>
<proteinExistence type="inferred from homology"/>
<gene>
    <name evidence="1" type="primary">leuS</name>
    <name type="ordered locus">LMOf2365_1684</name>
</gene>
<protein>
    <recommendedName>
        <fullName evidence="1">Leucine--tRNA ligase</fullName>
        <ecNumber evidence="1">6.1.1.4</ecNumber>
    </recommendedName>
    <alternativeName>
        <fullName evidence="1">Leucyl-tRNA synthetase</fullName>
        <shortName evidence="1">LeuRS</shortName>
    </alternativeName>
</protein>
<organism>
    <name type="scientific">Listeria monocytogenes serotype 4b (strain F2365)</name>
    <dbReference type="NCBI Taxonomy" id="265669"/>
    <lineage>
        <taxon>Bacteria</taxon>
        <taxon>Bacillati</taxon>
        <taxon>Bacillota</taxon>
        <taxon>Bacilli</taxon>
        <taxon>Bacillales</taxon>
        <taxon>Listeriaceae</taxon>
        <taxon>Listeria</taxon>
    </lineage>
</organism>
<accession>Q71Z07</accession>
<keyword id="KW-0030">Aminoacyl-tRNA synthetase</keyword>
<keyword id="KW-0067">ATP-binding</keyword>
<keyword id="KW-0963">Cytoplasm</keyword>
<keyword id="KW-0436">Ligase</keyword>
<keyword id="KW-0547">Nucleotide-binding</keyword>
<keyword id="KW-0648">Protein biosynthesis</keyword>
<dbReference type="EC" id="6.1.1.4" evidence="1"/>
<dbReference type="EMBL" id="AE017262">
    <property type="protein sequence ID" value="AAT04457.1"/>
    <property type="molecule type" value="Genomic_DNA"/>
</dbReference>
<dbReference type="RefSeq" id="WP_003742319.1">
    <property type="nucleotide sequence ID" value="NC_002973.6"/>
</dbReference>
<dbReference type="SMR" id="Q71Z07"/>
<dbReference type="KEGG" id="lmf:LMOf2365_1684"/>
<dbReference type="HOGENOM" id="CLU_004427_0_0_9"/>
<dbReference type="GO" id="GO:0005829">
    <property type="term" value="C:cytosol"/>
    <property type="evidence" value="ECO:0007669"/>
    <property type="project" value="TreeGrafter"/>
</dbReference>
<dbReference type="GO" id="GO:0002161">
    <property type="term" value="F:aminoacyl-tRNA deacylase activity"/>
    <property type="evidence" value="ECO:0007669"/>
    <property type="project" value="InterPro"/>
</dbReference>
<dbReference type="GO" id="GO:0005524">
    <property type="term" value="F:ATP binding"/>
    <property type="evidence" value="ECO:0007669"/>
    <property type="project" value="UniProtKB-UniRule"/>
</dbReference>
<dbReference type="GO" id="GO:0004823">
    <property type="term" value="F:leucine-tRNA ligase activity"/>
    <property type="evidence" value="ECO:0007669"/>
    <property type="project" value="UniProtKB-UniRule"/>
</dbReference>
<dbReference type="GO" id="GO:0006429">
    <property type="term" value="P:leucyl-tRNA aminoacylation"/>
    <property type="evidence" value="ECO:0007669"/>
    <property type="project" value="UniProtKB-UniRule"/>
</dbReference>
<dbReference type="CDD" id="cd07958">
    <property type="entry name" value="Anticodon_Ia_Leu_BEm"/>
    <property type="match status" value="1"/>
</dbReference>
<dbReference type="CDD" id="cd00812">
    <property type="entry name" value="LeuRS_core"/>
    <property type="match status" value="1"/>
</dbReference>
<dbReference type="FunFam" id="1.10.730.10:FF:000018">
    <property type="entry name" value="Leucine--tRNA ligase"/>
    <property type="match status" value="1"/>
</dbReference>
<dbReference type="FunFam" id="3.10.20.590:FF:000001">
    <property type="entry name" value="Leucine--tRNA ligase"/>
    <property type="match status" value="1"/>
</dbReference>
<dbReference type="FunFam" id="3.40.50.620:FF:000056">
    <property type="entry name" value="Leucine--tRNA ligase"/>
    <property type="match status" value="1"/>
</dbReference>
<dbReference type="FunFam" id="3.40.50.620:FF:000077">
    <property type="entry name" value="Leucine--tRNA ligase"/>
    <property type="match status" value="1"/>
</dbReference>
<dbReference type="Gene3D" id="3.10.20.590">
    <property type="match status" value="1"/>
</dbReference>
<dbReference type="Gene3D" id="3.40.50.620">
    <property type="entry name" value="HUPs"/>
    <property type="match status" value="2"/>
</dbReference>
<dbReference type="Gene3D" id="1.10.730.10">
    <property type="entry name" value="Isoleucyl-tRNA Synthetase, Domain 1"/>
    <property type="match status" value="1"/>
</dbReference>
<dbReference type="HAMAP" id="MF_00049_B">
    <property type="entry name" value="Leu_tRNA_synth_B"/>
    <property type="match status" value="1"/>
</dbReference>
<dbReference type="InterPro" id="IPR001412">
    <property type="entry name" value="aa-tRNA-synth_I_CS"/>
</dbReference>
<dbReference type="InterPro" id="IPR002300">
    <property type="entry name" value="aa-tRNA-synth_Ia"/>
</dbReference>
<dbReference type="InterPro" id="IPR002302">
    <property type="entry name" value="Leu-tRNA-ligase"/>
</dbReference>
<dbReference type="InterPro" id="IPR025709">
    <property type="entry name" value="Leu_tRNA-synth_edit"/>
</dbReference>
<dbReference type="InterPro" id="IPR013155">
    <property type="entry name" value="M/V/L/I-tRNA-synth_anticd-bd"/>
</dbReference>
<dbReference type="InterPro" id="IPR015413">
    <property type="entry name" value="Methionyl/Leucyl_tRNA_Synth"/>
</dbReference>
<dbReference type="InterPro" id="IPR014729">
    <property type="entry name" value="Rossmann-like_a/b/a_fold"/>
</dbReference>
<dbReference type="InterPro" id="IPR009080">
    <property type="entry name" value="tRNAsynth_Ia_anticodon-bd"/>
</dbReference>
<dbReference type="InterPro" id="IPR009008">
    <property type="entry name" value="Val/Leu/Ile-tRNA-synth_edit"/>
</dbReference>
<dbReference type="NCBIfam" id="TIGR00396">
    <property type="entry name" value="leuS_bact"/>
    <property type="match status" value="1"/>
</dbReference>
<dbReference type="PANTHER" id="PTHR43740:SF2">
    <property type="entry name" value="LEUCINE--TRNA LIGASE, MITOCHONDRIAL"/>
    <property type="match status" value="1"/>
</dbReference>
<dbReference type="PANTHER" id="PTHR43740">
    <property type="entry name" value="LEUCYL-TRNA SYNTHETASE"/>
    <property type="match status" value="1"/>
</dbReference>
<dbReference type="Pfam" id="PF08264">
    <property type="entry name" value="Anticodon_1"/>
    <property type="match status" value="1"/>
</dbReference>
<dbReference type="Pfam" id="PF00133">
    <property type="entry name" value="tRNA-synt_1"/>
    <property type="match status" value="1"/>
</dbReference>
<dbReference type="Pfam" id="PF13603">
    <property type="entry name" value="tRNA-synt_1_2"/>
    <property type="match status" value="1"/>
</dbReference>
<dbReference type="Pfam" id="PF09334">
    <property type="entry name" value="tRNA-synt_1g"/>
    <property type="match status" value="1"/>
</dbReference>
<dbReference type="PRINTS" id="PR00985">
    <property type="entry name" value="TRNASYNTHLEU"/>
</dbReference>
<dbReference type="SUPFAM" id="SSF47323">
    <property type="entry name" value="Anticodon-binding domain of a subclass of class I aminoacyl-tRNA synthetases"/>
    <property type="match status" value="1"/>
</dbReference>
<dbReference type="SUPFAM" id="SSF52374">
    <property type="entry name" value="Nucleotidylyl transferase"/>
    <property type="match status" value="1"/>
</dbReference>
<dbReference type="SUPFAM" id="SSF50677">
    <property type="entry name" value="ValRS/IleRS/LeuRS editing domain"/>
    <property type="match status" value="1"/>
</dbReference>
<dbReference type="PROSITE" id="PS00178">
    <property type="entry name" value="AA_TRNA_LIGASE_I"/>
    <property type="match status" value="1"/>
</dbReference>
<comment type="catalytic activity">
    <reaction evidence="1">
        <text>tRNA(Leu) + L-leucine + ATP = L-leucyl-tRNA(Leu) + AMP + diphosphate</text>
        <dbReference type="Rhea" id="RHEA:11688"/>
        <dbReference type="Rhea" id="RHEA-COMP:9613"/>
        <dbReference type="Rhea" id="RHEA-COMP:9622"/>
        <dbReference type="ChEBI" id="CHEBI:30616"/>
        <dbReference type="ChEBI" id="CHEBI:33019"/>
        <dbReference type="ChEBI" id="CHEBI:57427"/>
        <dbReference type="ChEBI" id="CHEBI:78442"/>
        <dbReference type="ChEBI" id="CHEBI:78494"/>
        <dbReference type="ChEBI" id="CHEBI:456215"/>
        <dbReference type="EC" id="6.1.1.4"/>
    </reaction>
</comment>
<comment type="subcellular location">
    <subcellularLocation>
        <location evidence="1">Cytoplasm</location>
    </subcellularLocation>
</comment>
<comment type="similarity">
    <text evidence="1">Belongs to the class-I aminoacyl-tRNA synthetase family.</text>
</comment>
<evidence type="ECO:0000255" key="1">
    <source>
        <dbReference type="HAMAP-Rule" id="MF_00049"/>
    </source>
</evidence>
<name>SYL_LISMF</name>
<sequence length="803" mass="91939">MTFNHKKMEPKWQQYWSEHNTFKTTEDKNKDNFYALDMFPYPSGAGLHVGHPEGYTATDILSRMKRMQGKNVLHPIGWDAFGLPAEQYAIDTGNDPEEFTALNIANFTRQIKSLGFSYDWDREINTTDPEYYKWTQWIFEKLYEKGLAYEAEIAVNWCPALGTVLANEEVIDGKSERGGFPVFRKPMRQWMLKITAYADRLLDDLDLVDWPENIKDMQRNWIGRSEGAEVTFKIKDSDETFNVFTTRPDTLFGATYTVFAPEHELIEKITTPEQKEAVEAYKKQVELKSELERTDLAKDKTGVFTGAYAINPINGEEVPIWIADYVLIQYGTGAIMAVPAHDERDFEFAQQFGLNIRPVLEGGDVTKEAFTGDGPHINSDFLNGLAKAEAITAAIDWLEKEGIGSRKITYRLRDWLFSRQRYWGEPIPVIHWEDGETTLVPEDELPLLLPKATEIKPSGTGESPLANLHDWVNVTDKNGRKGRRETNTMPQWAGSSWYFLRYIDPNNSEAIADKEKLAEWLPVDVYIGGAEHAVLHLLYARFWHKFLYDIGVVPTKEPFQKLFNQGMILGENNEKMSKSRGNVVNPDEVVEKYGADTLRLYEMFMGPLEASIAWNENGLEGARKFLDRIWRLLVTEEGTLAEKVTTDANANLEKAYHHMVKTVTNHYENLRFNTGISQLMIFINEAYKQDTIPKQYVEGFVQLLSPIAPHLAEELWEILGHTETISYVAWPTYDETKLVEDEVEIVLQVNGKVKSKITVAKSLEKEELEKIAQEDNKMKENLEGKTIRKVIVVPGKLVNIVAN</sequence>
<reference key="1">
    <citation type="journal article" date="2004" name="Nucleic Acids Res.">
        <title>Whole genome comparisons of serotype 4b and 1/2a strains of the food-borne pathogen Listeria monocytogenes reveal new insights into the core genome components of this species.</title>
        <authorList>
            <person name="Nelson K.E."/>
            <person name="Fouts D.E."/>
            <person name="Mongodin E.F."/>
            <person name="Ravel J."/>
            <person name="DeBoy R.T."/>
            <person name="Kolonay J.F."/>
            <person name="Rasko D.A."/>
            <person name="Angiuoli S.V."/>
            <person name="Gill S.R."/>
            <person name="Paulsen I.T."/>
            <person name="Peterson J.D."/>
            <person name="White O."/>
            <person name="Nelson W.C."/>
            <person name="Nierman W.C."/>
            <person name="Beanan M.J."/>
            <person name="Brinkac L.M."/>
            <person name="Daugherty S.C."/>
            <person name="Dodson R.J."/>
            <person name="Durkin A.S."/>
            <person name="Madupu R."/>
            <person name="Haft D.H."/>
            <person name="Selengut J."/>
            <person name="Van Aken S.E."/>
            <person name="Khouri H.M."/>
            <person name="Fedorova N."/>
            <person name="Forberger H.A."/>
            <person name="Tran B."/>
            <person name="Kathariou S."/>
            <person name="Wonderling L.D."/>
            <person name="Uhlich G.A."/>
            <person name="Bayles D.O."/>
            <person name="Luchansky J.B."/>
            <person name="Fraser C.M."/>
        </authorList>
    </citation>
    <scope>NUCLEOTIDE SEQUENCE [LARGE SCALE GENOMIC DNA]</scope>
    <source>
        <strain>F2365</strain>
    </source>
</reference>